<reference key="1">
    <citation type="journal article" date="2006" name="J. Bacteriol.">
        <title>Whole-genome sequence of Listeria welshimeri reveals common steps in genome reduction with Listeria innocua as compared to Listeria monocytogenes.</title>
        <authorList>
            <person name="Hain T."/>
            <person name="Steinweg C."/>
            <person name="Kuenne C.T."/>
            <person name="Billion A."/>
            <person name="Ghai R."/>
            <person name="Chatterjee S.S."/>
            <person name="Domann E."/>
            <person name="Kaerst U."/>
            <person name="Goesmann A."/>
            <person name="Bekel T."/>
            <person name="Bartels D."/>
            <person name="Kaiser O."/>
            <person name="Meyer F."/>
            <person name="Puehler A."/>
            <person name="Weisshaar B."/>
            <person name="Wehland J."/>
            <person name="Liang C."/>
            <person name="Dandekar T."/>
            <person name="Lampidis R."/>
            <person name="Kreft J."/>
            <person name="Goebel W."/>
            <person name="Chakraborty T."/>
        </authorList>
    </citation>
    <scope>NUCLEOTIDE SEQUENCE [LARGE SCALE GENOMIC DNA]</scope>
    <source>
        <strain>ATCC 35897 / DSM 20650 / CCUG 15529 / CIP 8149 / NCTC 11857 / SLCC 5334 / V8</strain>
    </source>
</reference>
<keyword id="KW-1003">Cell membrane</keyword>
<keyword id="KW-0444">Lipid biosynthesis</keyword>
<keyword id="KW-0443">Lipid metabolism</keyword>
<keyword id="KW-0472">Membrane</keyword>
<keyword id="KW-0594">Phospholipid biosynthesis</keyword>
<keyword id="KW-1208">Phospholipid metabolism</keyword>
<keyword id="KW-0808">Transferase</keyword>
<keyword id="KW-0812">Transmembrane</keyword>
<keyword id="KW-1133">Transmembrane helix</keyword>
<evidence type="ECO:0000255" key="1">
    <source>
        <dbReference type="HAMAP-Rule" id="MF_01043"/>
    </source>
</evidence>
<sequence length="198" mass="21756">MTINLILLSLLAYVIGSIPSGLWIGKFFYKKDIREFGSGNLGATNSFRVLGIKAGSIVTVMDILKGTVATLLPFFFQLHVDHHFWLLTGAFAIIGHSFPLFAGFRGGKAVATSAGVILAYAPLLFVAALIIFLLTLKISKYVSLSSMIAALAALLISLFMGDWILIILIACITLFVVWRHRANITRIRNGEEPKIKWM</sequence>
<dbReference type="EC" id="2.3.1.275" evidence="1"/>
<dbReference type="EMBL" id="AM263198">
    <property type="protein sequence ID" value="CAK20719.1"/>
    <property type="molecule type" value="Genomic_DNA"/>
</dbReference>
<dbReference type="RefSeq" id="WP_011702108.1">
    <property type="nucleotide sequence ID" value="NC_008555.1"/>
</dbReference>
<dbReference type="SMR" id="A0AI87"/>
<dbReference type="STRING" id="386043.lwe1301"/>
<dbReference type="GeneID" id="61189178"/>
<dbReference type="KEGG" id="lwe:lwe1301"/>
<dbReference type="eggNOG" id="COG0344">
    <property type="taxonomic scope" value="Bacteria"/>
</dbReference>
<dbReference type="HOGENOM" id="CLU_081254_4_0_9"/>
<dbReference type="OrthoDB" id="9777124at2"/>
<dbReference type="UniPathway" id="UPA00085"/>
<dbReference type="Proteomes" id="UP000000779">
    <property type="component" value="Chromosome"/>
</dbReference>
<dbReference type="GO" id="GO:0005886">
    <property type="term" value="C:plasma membrane"/>
    <property type="evidence" value="ECO:0007669"/>
    <property type="project" value="UniProtKB-SubCell"/>
</dbReference>
<dbReference type="GO" id="GO:0043772">
    <property type="term" value="F:acyl-phosphate glycerol-3-phosphate acyltransferase activity"/>
    <property type="evidence" value="ECO:0007669"/>
    <property type="project" value="UniProtKB-UniRule"/>
</dbReference>
<dbReference type="GO" id="GO:0008654">
    <property type="term" value="P:phospholipid biosynthetic process"/>
    <property type="evidence" value="ECO:0007669"/>
    <property type="project" value="UniProtKB-UniRule"/>
</dbReference>
<dbReference type="HAMAP" id="MF_01043">
    <property type="entry name" value="PlsY"/>
    <property type="match status" value="1"/>
</dbReference>
<dbReference type="InterPro" id="IPR003811">
    <property type="entry name" value="G3P_acylTferase_PlsY"/>
</dbReference>
<dbReference type="NCBIfam" id="TIGR00023">
    <property type="entry name" value="glycerol-3-phosphate 1-O-acyltransferase PlsY"/>
    <property type="match status" value="1"/>
</dbReference>
<dbReference type="PANTHER" id="PTHR30309:SF0">
    <property type="entry name" value="GLYCEROL-3-PHOSPHATE ACYLTRANSFERASE-RELATED"/>
    <property type="match status" value="1"/>
</dbReference>
<dbReference type="PANTHER" id="PTHR30309">
    <property type="entry name" value="INNER MEMBRANE PROTEIN YGIH"/>
    <property type="match status" value="1"/>
</dbReference>
<dbReference type="Pfam" id="PF02660">
    <property type="entry name" value="G3P_acyltransf"/>
    <property type="match status" value="1"/>
</dbReference>
<dbReference type="SMART" id="SM01207">
    <property type="entry name" value="G3P_acyltransf"/>
    <property type="match status" value="1"/>
</dbReference>
<gene>
    <name evidence="1" type="primary">plsY</name>
    <name type="ordered locus">lwe1301</name>
</gene>
<name>PLSY_LISW6</name>
<organism>
    <name type="scientific">Listeria welshimeri serovar 6b (strain ATCC 35897 / DSM 20650 / CCUG 15529 / CIP 8149 / NCTC 11857 / SLCC 5334 / V8)</name>
    <dbReference type="NCBI Taxonomy" id="386043"/>
    <lineage>
        <taxon>Bacteria</taxon>
        <taxon>Bacillati</taxon>
        <taxon>Bacillota</taxon>
        <taxon>Bacilli</taxon>
        <taxon>Bacillales</taxon>
        <taxon>Listeriaceae</taxon>
        <taxon>Listeria</taxon>
    </lineage>
</organism>
<protein>
    <recommendedName>
        <fullName evidence="1">Glycerol-3-phosphate acyltransferase</fullName>
    </recommendedName>
    <alternativeName>
        <fullName evidence="1">Acyl-PO4 G3P acyltransferase</fullName>
    </alternativeName>
    <alternativeName>
        <fullName evidence="1">Acyl-phosphate--glycerol-3-phosphate acyltransferase</fullName>
    </alternativeName>
    <alternativeName>
        <fullName evidence="1">G3P acyltransferase</fullName>
        <shortName evidence="1">GPAT</shortName>
        <ecNumber evidence="1">2.3.1.275</ecNumber>
    </alternativeName>
    <alternativeName>
        <fullName evidence="1">Lysophosphatidic acid synthase</fullName>
        <shortName evidence="1">LPA synthase</shortName>
    </alternativeName>
</protein>
<comment type="function">
    <text evidence="1">Catalyzes the transfer of an acyl group from acyl-phosphate (acyl-PO(4)) to glycerol-3-phosphate (G3P) to form lysophosphatidic acid (LPA). This enzyme utilizes acyl-phosphate as fatty acyl donor, but not acyl-CoA or acyl-ACP.</text>
</comment>
<comment type="catalytic activity">
    <reaction evidence="1">
        <text>an acyl phosphate + sn-glycerol 3-phosphate = a 1-acyl-sn-glycero-3-phosphate + phosphate</text>
        <dbReference type="Rhea" id="RHEA:34075"/>
        <dbReference type="ChEBI" id="CHEBI:43474"/>
        <dbReference type="ChEBI" id="CHEBI:57597"/>
        <dbReference type="ChEBI" id="CHEBI:57970"/>
        <dbReference type="ChEBI" id="CHEBI:59918"/>
        <dbReference type="EC" id="2.3.1.275"/>
    </reaction>
</comment>
<comment type="pathway">
    <text evidence="1">Lipid metabolism; phospholipid metabolism.</text>
</comment>
<comment type="subunit">
    <text evidence="1">Probably interacts with PlsX.</text>
</comment>
<comment type="subcellular location">
    <subcellularLocation>
        <location evidence="1">Cell membrane</location>
        <topology evidence="1">Multi-pass membrane protein</topology>
    </subcellularLocation>
</comment>
<comment type="similarity">
    <text evidence="1">Belongs to the PlsY family.</text>
</comment>
<accession>A0AI87</accession>
<proteinExistence type="inferred from homology"/>
<feature type="chain" id="PRO_1000064195" description="Glycerol-3-phosphate acyltransferase">
    <location>
        <begin position="1"/>
        <end position="198"/>
    </location>
</feature>
<feature type="transmembrane region" description="Helical" evidence="1">
    <location>
        <begin position="5"/>
        <end position="25"/>
    </location>
</feature>
<feature type="transmembrane region" description="Helical" evidence="1">
    <location>
        <begin position="56"/>
        <end position="76"/>
    </location>
</feature>
<feature type="transmembrane region" description="Helical" evidence="1">
    <location>
        <begin position="84"/>
        <end position="104"/>
    </location>
</feature>
<feature type="transmembrane region" description="Helical" evidence="1">
    <location>
        <begin position="114"/>
        <end position="134"/>
    </location>
</feature>
<feature type="transmembrane region" description="Helical" evidence="1">
    <location>
        <begin position="158"/>
        <end position="178"/>
    </location>
</feature>